<evidence type="ECO:0000255" key="1">
    <source>
        <dbReference type="HAMAP-Rule" id="MF_00149"/>
    </source>
</evidence>
<sequence length="576" mass="64178">MSLSPSRIRLLDSVTVNQISAGEVIENAASVVKELIENSLDAGADEIHIETLGGGRGQIVVRDNGVGMDPEEVPVALQRHATSKIAHFADIFSLASYGFRGEALPSIASISKMEIHTARAGGLGSKTLIEKGEPVCCEPAPRQQGTTIAVHSLFYNVPMRQSFQKSPQMDRLAIRRLLENSVLSSEGIGWTWISERRQELHVAKKQGFIERVALVLGESFVQEAFFIDKQQGDLRVLGFLGSPNQHRSTRQGQRLFINNRAVESSFISKKVAEAYAWMIPAQRYPIFVLKLFLPPMWCDFNVHPQKTEVRLLQEGQISNLLVEAISEALLRRSSSLEEIVLKVPTEKIPIENEGISVPSIRPAIVSAPLSCPTFSQQPYLKTEMATIVSRDSASSSLSVVEKVRFLTSLGKVLLVEDSEGVHVVFVQAARKHLFYVSLLSERLESRLACQTFLLPPSVQMTKLEADFLQMRLEALTALGIELSRISPDSFAIESAPPFIQEEELKEWIVALAQEGALHVGESFEQLVENTVQKLVFSRNARAFDYAWLDILWKLGKPEKAFDGEMIRRLVLDDDFM</sequence>
<keyword id="KW-0227">DNA damage</keyword>
<keyword id="KW-0234">DNA repair</keyword>
<feature type="chain" id="PRO_1000096639" description="DNA mismatch repair protein MutL">
    <location>
        <begin position="1"/>
        <end position="576"/>
    </location>
</feature>
<protein>
    <recommendedName>
        <fullName evidence="1">DNA mismatch repair protein MutL</fullName>
    </recommendedName>
</protein>
<organism>
    <name type="scientific">Chlamydia trachomatis serovar L2 (strain ATCC VR-902B / DSM 19102 / 434/Bu)</name>
    <dbReference type="NCBI Taxonomy" id="471472"/>
    <lineage>
        <taxon>Bacteria</taxon>
        <taxon>Pseudomonadati</taxon>
        <taxon>Chlamydiota</taxon>
        <taxon>Chlamydiia</taxon>
        <taxon>Chlamydiales</taxon>
        <taxon>Chlamydiaceae</taxon>
        <taxon>Chlamydia/Chlamydophila group</taxon>
        <taxon>Chlamydia</taxon>
    </lineage>
</organism>
<dbReference type="EMBL" id="AM884176">
    <property type="protein sequence ID" value="CAP04275.1"/>
    <property type="molecule type" value="Genomic_DNA"/>
</dbReference>
<dbReference type="RefSeq" id="WP_009873910.1">
    <property type="nucleotide sequence ID" value="NC_010287.1"/>
</dbReference>
<dbReference type="RefSeq" id="YP_001654908.1">
    <property type="nucleotide sequence ID" value="NC_010287.1"/>
</dbReference>
<dbReference type="SMR" id="B0B8E9"/>
<dbReference type="KEGG" id="ctb:CTL0838"/>
<dbReference type="PATRIC" id="fig|471472.4.peg.898"/>
<dbReference type="HOGENOM" id="CLU_004131_4_3_0"/>
<dbReference type="Proteomes" id="UP001154402">
    <property type="component" value="Chromosome"/>
</dbReference>
<dbReference type="GO" id="GO:0032300">
    <property type="term" value="C:mismatch repair complex"/>
    <property type="evidence" value="ECO:0007669"/>
    <property type="project" value="InterPro"/>
</dbReference>
<dbReference type="GO" id="GO:0005524">
    <property type="term" value="F:ATP binding"/>
    <property type="evidence" value="ECO:0007669"/>
    <property type="project" value="InterPro"/>
</dbReference>
<dbReference type="GO" id="GO:0016887">
    <property type="term" value="F:ATP hydrolysis activity"/>
    <property type="evidence" value="ECO:0007669"/>
    <property type="project" value="InterPro"/>
</dbReference>
<dbReference type="GO" id="GO:0140664">
    <property type="term" value="F:ATP-dependent DNA damage sensor activity"/>
    <property type="evidence" value="ECO:0007669"/>
    <property type="project" value="InterPro"/>
</dbReference>
<dbReference type="GO" id="GO:0030983">
    <property type="term" value="F:mismatched DNA binding"/>
    <property type="evidence" value="ECO:0007669"/>
    <property type="project" value="InterPro"/>
</dbReference>
<dbReference type="GO" id="GO:0006298">
    <property type="term" value="P:mismatch repair"/>
    <property type="evidence" value="ECO:0007669"/>
    <property type="project" value="UniProtKB-UniRule"/>
</dbReference>
<dbReference type="CDD" id="cd16926">
    <property type="entry name" value="HATPase_MutL-MLH-PMS-like"/>
    <property type="match status" value="1"/>
</dbReference>
<dbReference type="CDD" id="cd00782">
    <property type="entry name" value="MutL_Trans"/>
    <property type="match status" value="1"/>
</dbReference>
<dbReference type="FunFam" id="3.30.565.10:FF:000003">
    <property type="entry name" value="DNA mismatch repair endonuclease MutL"/>
    <property type="match status" value="1"/>
</dbReference>
<dbReference type="Gene3D" id="3.30.230.10">
    <property type="match status" value="1"/>
</dbReference>
<dbReference type="Gene3D" id="3.30.565.10">
    <property type="entry name" value="Histidine kinase-like ATPase, C-terminal domain"/>
    <property type="match status" value="1"/>
</dbReference>
<dbReference type="Gene3D" id="3.30.1370.100">
    <property type="entry name" value="MutL, C-terminal domain, regulatory subdomain"/>
    <property type="match status" value="1"/>
</dbReference>
<dbReference type="HAMAP" id="MF_00149">
    <property type="entry name" value="DNA_mis_repair"/>
    <property type="match status" value="1"/>
</dbReference>
<dbReference type="InterPro" id="IPR014762">
    <property type="entry name" value="DNA_mismatch_repair_CS"/>
</dbReference>
<dbReference type="InterPro" id="IPR020667">
    <property type="entry name" value="DNA_mismatch_repair_MutL"/>
</dbReference>
<dbReference type="InterPro" id="IPR013507">
    <property type="entry name" value="DNA_mismatch_S5_2-like"/>
</dbReference>
<dbReference type="InterPro" id="IPR036890">
    <property type="entry name" value="HATPase_C_sf"/>
</dbReference>
<dbReference type="InterPro" id="IPR002099">
    <property type="entry name" value="MutL/Mlh/PMS"/>
</dbReference>
<dbReference type="InterPro" id="IPR038973">
    <property type="entry name" value="MutL/Mlh/Pms-like"/>
</dbReference>
<dbReference type="InterPro" id="IPR014790">
    <property type="entry name" value="MutL_C"/>
</dbReference>
<dbReference type="InterPro" id="IPR042121">
    <property type="entry name" value="MutL_C_regsub"/>
</dbReference>
<dbReference type="InterPro" id="IPR037198">
    <property type="entry name" value="MutL_C_sf"/>
</dbReference>
<dbReference type="InterPro" id="IPR020568">
    <property type="entry name" value="Ribosomal_Su5_D2-typ_SF"/>
</dbReference>
<dbReference type="InterPro" id="IPR014721">
    <property type="entry name" value="Ribsml_uS5_D2-typ_fold_subgr"/>
</dbReference>
<dbReference type="NCBIfam" id="TIGR00585">
    <property type="entry name" value="mutl"/>
    <property type="match status" value="1"/>
</dbReference>
<dbReference type="NCBIfam" id="NF000954">
    <property type="entry name" value="PRK00095.2-5"/>
    <property type="match status" value="1"/>
</dbReference>
<dbReference type="PANTHER" id="PTHR10073">
    <property type="entry name" value="DNA MISMATCH REPAIR PROTEIN MLH, PMS, MUTL"/>
    <property type="match status" value="1"/>
</dbReference>
<dbReference type="PANTHER" id="PTHR10073:SF12">
    <property type="entry name" value="DNA MISMATCH REPAIR PROTEIN MLH1"/>
    <property type="match status" value="1"/>
</dbReference>
<dbReference type="Pfam" id="PF01119">
    <property type="entry name" value="DNA_mis_repair"/>
    <property type="match status" value="1"/>
</dbReference>
<dbReference type="Pfam" id="PF13589">
    <property type="entry name" value="HATPase_c_3"/>
    <property type="match status" value="1"/>
</dbReference>
<dbReference type="Pfam" id="PF08676">
    <property type="entry name" value="MutL_C"/>
    <property type="match status" value="1"/>
</dbReference>
<dbReference type="SMART" id="SM01340">
    <property type="entry name" value="DNA_mis_repair"/>
    <property type="match status" value="1"/>
</dbReference>
<dbReference type="SMART" id="SM00853">
    <property type="entry name" value="MutL_C"/>
    <property type="match status" value="1"/>
</dbReference>
<dbReference type="SUPFAM" id="SSF55874">
    <property type="entry name" value="ATPase domain of HSP90 chaperone/DNA topoisomerase II/histidine kinase"/>
    <property type="match status" value="1"/>
</dbReference>
<dbReference type="SUPFAM" id="SSF118116">
    <property type="entry name" value="DNA mismatch repair protein MutL"/>
    <property type="match status" value="1"/>
</dbReference>
<dbReference type="SUPFAM" id="SSF54211">
    <property type="entry name" value="Ribosomal protein S5 domain 2-like"/>
    <property type="match status" value="1"/>
</dbReference>
<dbReference type="PROSITE" id="PS00058">
    <property type="entry name" value="DNA_MISMATCH_REPAIR_1"/>
    <property type="match status" value="1"/>
</dbReference>
<proteinExistence type="inferred from homology"/>
<accession>B0B8E9</accession>
<comment type="function">
    <text evidence="1">This protein is involved in the repair of mismatches in DNA. It is required for dam-dependent methyl-directed DNA mismatch repair. May act as a 'molecular matchmaker', a protein that promotes the formation of a stable complex between two or more DNA-binding proteins in an ATP-dependent manner without itself being part of a final effector complex.</text>
</comment>
<comment type="similarity">
    <text evidence="1">Belongs to the DNA mismatch repair MutL/HexB family.</text>
</comment>
<reference key="1">
    <citation type="journal article" date="2008" name="Genome Res.">
        <title>Chlamydia trachomatis: genome sequence analysis of lymphogranuloma venereum isolates.</title>
        <authorList>
            <person name="Thomson N.R."/>
            <person name="Holden M.T.G."/>
            <person name="Carder C."/>
            <person name="Lennard N."/>
            <person name="Lockey S.J."/>
            <person name="Marsh P."/>
            <person name="Skipp P."/>
            <person name="O'Connor C.D."/>
            <person name="Goodhead I."/>
            <person name="Norbertzcak H."/>
            <person name="Harris B."/>
            <person name="Ormond D."/>
            <person name="Rance R."/>
            <person name="Quail M.A."/>
            <person name="Parkhill J."/>
            <person name="Stephens R.S."/>
            <person name="Clarke I.N."/>
        </authorList>
    </citation>
    <scope>NUCLEOTIDE SEQUENCE [LARGE SCALE GENOMIC DNA]</scope>
    <source>
        <strain>ATCC VR-902B / DSM 19102 / 434/Bu</strain>
    </source>
</reference>
<name>MUTL_CHLT2</name>
<gene>
    <name evidence="1" type="primary">mutL</name>
    <name type="ordered locus">CTL0838</name>
</gene>